<reference key="1">
    <citation type="journal article" date="2003" name="Lancet">
        <title>Genome sequence of Vibrio parahaemolyticus: a pathogenic mechanism distinct from that of V. cholerae.</title>
        <authorList>
            <person name="Makino K."/>
            <person name="Oshima K."/>
            <person name="Kurokawa K."/>
            <person name="Yokoyama K."/>
            <person name="Uda T."/>
            <person name="Tagomori K."/>
            <person name="Iijima Y."/>
            <person name="Najima M."/>
            <person name="Nakano M."/>
            <person name="Yamashita A."/>
            <person name="Kubota Y."/>
            <person name="Kimura S."/>
            <person name="Yasunaga T."/>
            <person name="Honda T."/>
            <person name="Shinagawa H."/>
            <person name="Hattori M."/>
            <person name="Iida T."/>
        </authorList>
    </citation>
    <scope>NUCLEOTIDE SEQUENCE [LARGE SCALE GENOMIC DNA]</scope>
    <source>
        <strain>RIMD 2210633</strain>
    </source>
</reference>
<name>RNFA_VIBPA</name>
<protein>
    <recommendedName>
        <fullName evidence="1">Ion-translocating oxidoreductase complex subunit A</fullName>
        <ecNumber evidence="1">7.-.-.-</ecNumber>
    </recommendedName>
    <alternativeName>
        <fullName evidence="1">Rnf electron transport complex subunit A</fullName>
    </alternativeName>
</protein>
<comment type="function">
    <text evidence="1">Part of a membrane-bound complex that couples electron transfer with translocation of ions across the membrane.</text>
</comment>
<comment type="subunit">
    <text evidence="1">The complex is composed of six subunits: RnfA, RnfB, RnfC, RnfD, RnfE and RnfG.</text>
</comment>
<comment type="subcellular location">
    <subcellularLocation>
        <location evidence="1">Cell inner membrane</location>
        <topology evidence="1">Multi-pass membrane protein</topology>
    </subcellularLocation>
</comment>
<comment type="similarity">
    <text evidence="1">Belongs to the NqrDE/RnfAE family.</text>
</comment>
<comment type="sequence caution" evidence="2">
    <conflict type="erroneous initiation">
        <sequence resource="EMBL-CDS" id="BAC60365"/>
    </conflict>
</comment>
<evidence type="ECO:0000255" key="1">
    <source>
        <dbReference type="HAMAP-Rule" id="MF_00459"/>
    </source>
</evidence>
<evidence type="ECO:0000305" key="2"/>
<organism>
    <name type="scientific">Vibrio parahaemolyticus serotype O3:K6 (strain RIMD 2210633)</name>
    <dbReference type="NCBI Taxonomy" id="223926"/>
    <lineage>
        <taxon>Bacteria</taxon>
        <taxon>Pseudomonadati</taxon>
        <taxon>Pseudomonadota</taxon>
        <taxon>Gammaproteobacteria</taxon>
        <taxon>Vibrionales</taxon>
        <taxon>Vibrionaceae</taxon>
        <taxon>Vibrio</taxon>
    </lineage>
</organism>
<keyword id="KW-0997">Cell inner membrane</keyword>
<keyword id="KW-1003">Cell membrane</keyword>
<keyword id="KW-0249">Electron transport</keyword>
<keyword id="KW-0472">Membrane</keyword>
<keyword id="KW-1278">Translocase</keyword>
<keyword id="KW-0812">Transmembrane</keyword>
<keyword id="KW-1133">Transmembrane helix</keyword>
<keyword id="KW-0813">Transport</keyword>
<accession>Q87MX4</accession>
<proteinExistence type="inferred from homology"/>
<feature type="chain" id="PRO_0000214300" description="Ion-translocating oxidoreductase complex subunit A">
    <location>
        <begin position="1"/>
        <end position="192"/>
    </location>
</feature>
<feature type="transmembrane region" description="Helical" evidence="1">
    <location>
        <begin position="5"/>
        <end position="25"/>
    </location>
</feature>
<feature type="transmembrane region" description="Helical" evidence="1">
    <location>
        <begin position="39"/>
        <end position="59"/>
    </location>
</feature>
<feature type="transmembrane region" description="Helical" evidence="1">
    <location>
        <begin position="67"/>
        <end position="87"/>
    </location>
</feature>
<feature type="transmembrane region" description="Helical" evidence="1">
    <location>
        <begin position="102"/>
        <end position="122"/>
    </location>
</feature>
<feature type="transmembrane region" description="Helical" evidence="1">
    <location>
        <begin position="134"/>
        <end position="154"/>
    </location>
</feature>
<feature type="transmembrane region" description="Helical" evidence="1">
    <location>
        <begin position="171"/>
        <end position="191"/>
    </location>
</feature>
<gene>
    <name evidence="1" type="primary">rnfA</name>
    <name type="ordered locus">VP2102</name>
</gene>
<dbReference type="EC" id="7.-.-.-" evidence="1"/>
<dbReference type="EMBL" id="BA000031">
    <property type="protein sequence ID" value="BAC60365.1"/>
    <property type="status" value="ALT_INIT"/>
    <property type="molecule type" value="Genomic_DNA"/>
</dbReference>
<dbReference type="RefSeq" id="NP_798481.2">
    <property type="nucleotide sequence ID" value="NC_004603.1"/>
</dbReference>
<dbReference type="SMR" id="Q87MX4"/>
<dbReference type="KEGG" id="vpa:VP2102"/>
<dbReference type="PATRIC" id="fig|223926.6.peg.2012"/>
<dbReference type="eggNOG" id="COG4657">
    <property type="taxonomic scope" value="Bacteria"/>
</dbReference>
<dbReference type="HOGENOM" id="CLU_095255_1_0_6"/>
<dbReference type="Proteomes" id="UP000002493">
    <property type="component" value="Chromosome 1"/>
</dbReference>
<dbReference type="GO" id="GO:0005886">
    <property type="term" value="C:plasma membrane"/>
    <property type="evidence" value="ECO:0007669"/>
    <property type="project" value="UniProtKB-SubCell"/>
</dbReference>
<dbReference type="GO" id="GO:0022900">
    <property type="term" value="P:electron transport chain"/>
    <property type="evidence" value="ECO:0007669"/>
    <property type="project" value="UniProtKB-UniRule"/>
</dbReference>
<dbReference type="HAMAP" id="MF_00459">
    <property type="entry name" value="RsxA_RnfA"/>
    <property type="match status" value="1"/>
</dbReference>
<dbReference type="InterPro" id="IPR011293">
    <property type="entry name" value="Ion_transpt_RnfA/RsxA"/>
</dbReference>
<dbReference type="InterPro" id="IPR003667">
    <property type="entry name" value="NqrDE/RnfAE"/>
</dbReference>
<dbReference type="InterPro" id="IPR050133">
    <property type="entry name" value="NqrDE/RnfAE_oxidrdctase"/>
</dbReference>
<dbReference type="NCBIfam" id="NF003481">
    <property type="entry name" value="PRK05151.1"/>
    <property type="match status" value="1"/>
</dbReference>
<dbReference type="NCBIfam" id="TIGR01943">
    <property type="entry name" value="rnfA"/>
    <property type="match status" value="1"/>
</dbReference>
<dbReference type="PANTHER" id="PTHR30335">
    <property type="entry name" value="INTEGRAL MEMBRANE PROTEIN OF SOXR-REDUCING COMPLEX"/>
    <property type="match status" value="1"/>
</dbReference>
<dbReference type="PANTHER" id="PTHR30335:SF0">
    <property type="entry name" value="ION-TRANSLOCATING OXIDOREDUCTASE COMPLEX SUBUNIT A"/>
    <property type="match status" value="1"/>
</dbReference>
<dbReference type="Pfam" id="PF02508">
    <property type="entry name" value="Rnf-Nqr"/>
    <property type="match status" value="1"/>
</dbReference>
<dbReference type="PIRSF" id="PIRSF006102">
    <property type="entry name" value="NQR_DE"/>
    <property type="match status" value="1"/>
</dbReference>
<sequence>MTEYVLLLVGTVLVNNFVLVKFLGLCPFMGVSKKLETAIGMGLATTFVLTLASVCAYLVESYILRPLGIEYLRTMSFILVIAVVVQFTEMVVHKTSPTLYRLLGIFLPLITTNCAVLGVALLNINENHNFIESIIYGFGAAVGFSLVLILFASMRERIAAADVPVPFKGASIAMITAGLMSLAFMGFTGLVK</sequence>